<accession>B7MYL3</accession>
<feature type="chain" id="PRO_1000199784" description="Uracil-DNA glycosylase">
    <location>
        <begin position="1"/>
        <end position="229"/>
    </location>
</feature>
<feature type="active site" description="Proton acceptor" evidence="1">
    <location>
        <position position="64"/>
    </location>
</feature>
<protein>
    <recommendedName>
        <fullName evidence="1">Uracil-DNA glycosylase</fullName>
        <shortName evidence="1">UDG</shortName>
        <ecNumber evidence="1">3.2.2.27</ecNumber>
    </recommendedName>
</protein>
<keyword id="KW-0963">Cytoplasm</keyword>
<keyword id="KW-0227">DNA damage</keyword>
<keyword id="KW-0234">DNA repair</keyword>
<keyword id="KW-0378">Hydrolase</keyword>
<dbReference type="EC" id="3.2.2.27" evidence="1"/>
<dbReference type="EMBL" id="CU928162">
    <property type="protein sequence ID" value="CAR09179.2"/>
    <property type="molecule type" value="Genomic_DNA"/>
</dbReference>
<dbReference type="RefSeq" id="WP_001262708.1">
    <property type="nucleotide sequence ID" value="NC_011745.1"/>
</dbReference>
<dbReference type="SMR" id="B7MYL3"/>
<dbReference type="KEGG" id="ecq:ECED1_3011"/>
<dbReference type="HOGENOM" id="CLU_032162_3_0_6"/>
<dbReference type="Proteomes" id="UP000000748">
    <property type="component" value="Chromosome"/>
</dbReference>
<dbReference type="GO" id="GO:0005737">
    <property type="term" value="C:cytoplasm"/>
    <property type="evidence" value="ECO:0007669"/>
    <property type="project" value="UniProtKB-SubCell"/>
</dbReference>
<dbReference type="GO" id="GO:0004844">
    <property type="term" value="F:uracil DNA N-glycosylase activity"/>
    <property type="evidence" value="ECO:0007669"/>
    <property type="project" value="UniProtKB-UniRule"/>
</dbReference>
<dbReference type="GO" id="GO:0097510">
    <property type="term" value="P:base-excision repair, AP site formation via deaminated base removal"/>
    <property type="evidence" value="ECO:0007669"/>
    <property type="project" value="TreeGrafter"/>
</dbReference>
<dbReference type="CDD" id="cd10027">
    <property type="entry name" value="UDG-F1-like"/>
    <property type="match status" value="1"/>
</dbReference>
<dbReference type="FunFam" id="3.40.470.10:FF:000001">
    <property type="entry name" value="Uracil-DNA glycosylase"/>
    <property type="match status" value="1"/>
</dbReference>
<dbReference type="Gene3D" id="3.40.470.10">
    <property type="entry name" value="Uracil-DNA glycosylase-like domain"/>
    <property type="match status" value="1"/>
</dbReference>
<dbReference type="HAMAP" id="MF_00148">
    <property type="entry name" value="UDG"/>
    <property type="match status" value="1"/>
</dbReference>
<dbReference type="InterPro" id="IPR002043">
    <property type="entry name" value="UDG_fam1"/>
</dbReference>
<dbReference type="InterPro" id="IPR018085">
    <property type="entry name" value="Ura-DNA_Glyclase_AS"/>
</dbReference>
<dbReference type="InterPro" id="IPR005122">
    <property type="entry name" value="Uracil-DNA_glycosylase-like"/>
</dbReference>
<dbReference type="InterPro" id="IPR036895">
    <property type="entry name" value="Uracil-DNA_glycosylase-like_sf"/>
</dbReference>
<dbReference type="NCBIfam" id="NF003588">
    <property type="entry name" value="PRK05254.1-1"/>
    <property type="match status" value="1"/>
</dbReference>
<dbReference type="NCBIfam" id="NF003589">
    <property type="entry name" value="PRK05254.1-2"/>
    <property type="match status" value="1"/>
</dbReference>
<dbReference type="NCBIfam" id="NF003591">
    <property type="entry name" value="PRK05254.1-4"/>
    <property type="match status" value="1"/>
</dbReference>
<dbReference type="NCBIfam" id="NF003592">
    <property type="entry name" value="PRK05254.1-5"/>
    <property type="match status" value="1"/>
</dbReference>
<dbReference type="NCBIfam" id="TIGR00628">
    <property type="entry name" value="ung"/>
    <property type="match status" value="1"/>
</dbReference>
<dbReference type="PANTHER" id="PTHR11264">
    <property type="entry name" value="URACIL-DNA GLYCOSYLASE"/>
    <property type="match status" value="1"/>
</dbReference>
<dbReference type="PANTHER" id="PTHR11264:SF0">
    <property type="entry name" value="URACIL-DNA GLYCOSYLASE"/>
    <property type="match status" value="1"/>
</dbReference>
<dbReference type="Pfam" id="PF03167">
    <property type="entry name" value="UDG"/>
    <property type="match status" value="1"/>
</dbReference>
<dbReference type="SMART" id="SM00986">
    <property type="entry name" value="UDG"/>
    <property type="match status" value="1"/>
</dbReference>
<dbReference type="SMART" id="SM00987">
    <property type="entry name" value="UreE_C"/>
    <property type="match status" value="1"/>
</dbReference>
<dbReference type="SUPFAM" id="SSF52141">
    <property type="entry name" value="Uracil-DNA glycosylase-like"/>
    <property type="match status" value="1"/>
</dbReference>
<dbReference type="PROSITE" id="PS00130">
    <property type="entry name" value="U_DNA_GLYCOSYLASE"/>
    <property type="match status" value="1"/>
</dbReference>
<evidence type="ECO:0000255" key="1">
    <source>
        <dbReference type="HAMAP-Rule" id="MF_00148"/>
    </source>
</evidence>
<gene>
    <name evidence="1" type="primary">ung</name>
    <name type="ordered locus">ECED1_3011</name>
</gene>
<comment type="function">
    <text evidence="1">Excises uracil residues from the DNA which can arise as a result of misincorporation of dUMP residues by DNA polymerase or due to deamination of cytosine.</text>
</comment>
<comment type="catalytic activity">
    <reaction evidence="1">
        <text>Hydrolyzes single-stranded DNA or mismatched double-stranded DNA and polynucleotides, releasing free uracil.</text>
        <dbReference type="EC" id="3.2.2.27"/>
    </reaction>
</comment>
<comment type="subcellular location">
    <subcellularLocation>
        <location evidence="1">Cytoplasm</location>
    </subcellularLocation>
</comment>
<comment type="similarity">
    <text evidence="1">Belongs to the uracil-DNA glycosylase (UDG) superfamily. UNG family.</text>
</comment>
<sequence>MANELTWHDVLAEEKQQPYFLNTLQTVASERQSGVTIYPPQKDVFNAFRFTALGDVKVVILGQDPYHGPGQAHGLAFSVRPGIATPPSLLNMYKELENTIPGFTRPNHGYLESWARQGVLLLNTVLTVRAGQAHSHASLGWETFTDKVISLINQHREGVVFLLWGSHAQKKGAIIDKQRHHILKAPHPSPLSAHRGFFGCNHFVLANQWLEQRGEKPIDWMPVLPAESE</sequence>
<reference key="1">
    <citation type="journal article" date="2009" name="PLoS Genet.">
        <title>Organised genome dynamics in the Escherichia coli species results in highly diverse adaptive paths.</title>
        <authorList>
            <person name="Touchon M."/>
            <person name="Hoede C."/>
            <person name="Tenaillon O."/>
            <person name="Barbe V."/>
            <person name="Baeriswyl S."/>
            <person name="Bidet P."/>
            <person name="Bingen E."/>
            <person name="Bonacorsi S."/>
            <person name="Bouchier C."/>
            <person name="Bouvet O."/>
            <person name="Calteau A."/>
            <person name="Chiapello H."/>
            <person name="Clermont O."/>
            <person name="Cruveiller S."/>
            <person name="Danchin A."/>
            <person name="Diard M."/>
            <person name="Dossat C."/>
            <person name="Karoui M.E."/>
            <person name="Frapy E."/>
            <person name="Garry L."/>
            <person name="Ghigo J.M."/>
            <person name="Gilles A.M."/>
            <person name="Johnson J."/>
            <person name="Le Bouguenec C."/>
            <person name="Lescat M."/>
            <person name="Mangenot S."/>
            <person name="Martinez-Jehanne V."/>
            <person name="Matic I."/>
            <person name="Nassif X."/>
            <person name="Oztas S."/>
            <person name="Petit M.A."/>
            <person name="Pichon C."/>
            <person name="Rouy Z."/>
            <person name="Ruf C.S."/>
            <person name="Schneider D."/>
            <person name="Tourret J."/>
            <person name="Vacherie B."/>
            <person name="Vallenet D."/>
            <person name="Medigue C."/>
            <person name="Rocha E.P.C."/>
            <person name="Denamur E."/>
        </authorList>
    </citation>
    <scope>NUCLEOTIDE SEQUENCE [LARGE SCALE GENOMIC DNA]</scope>
    <source>
        <strain>ED1a</strain>
    </source>
</reference>
<proteinExistence type="inferred from homology"/>
<name>UNG_ECO81</name>
<organism>
    <name type="scientific">Escherichia coli O81 (strain ED1a)</name>
    <dbReference type="NCBI Taxonomy" id="585397"/>
    <lineage>
        <taxon>Bacteria</taxon>
        <taxon>Pseudomonadati</taxon>
        <taxon>Pseudomonadota</taxon>
        <taxon>Gammaproteobacteria</taxon>
        <taxon>Enterobacterales</taxon>
        <taxon>Enterobacteriaceae</taxon>
        <taxon>Escherichia</taxon>
    </lineage>
</organism>